<keyword id="KW-0025">Alternative splicing</keyword>
<keyword id="KW-1048">Host nucleus</keyword>
<keyword id="KW-0472">Membrane</keyword>
<keyword id="KW-0694">RNA-binding</keyword>
<keyword id="KW-0468">Viral matrix protein</keyword>
<keyword id="KW-0946">Virion</keyword>
<feature type="chain" id="PRO_0000326276" description="Matrix protein 1">
    <location>
        <begin position="1"/>
        <end position="252"/>
    </location>
</feature>
<feature type="region of interest" description="Membrane-binding" evidence="1">
    <location>
        <begin position="1"/>
        <end position="164"/>
    </location>
</feature>
<feature type="region of interest" description="RNP-binding" evidence="1">
    <location>
        <begin position="165"/>
        <end position="252"/>
    </location>
</feature>
<feature type="short sequence motif" description="Nuclear localization signal" evidence="1">
    <location>
        <begin position="101"/>
        <end position="105"/>
    </location>
</feature>
<gene>
    <name evidence="1" type="primary">M</name>
</gene>
<name>M1_I37A0</name>
<organism>
    <name type="scientific">Influenza A virus (strain A/Swine/29/1937 H1N1)</name>
    <dbReference type="NCBI Taxonomy" id="382842"/>
    <lineage>
        <taxon>Viruses</taxon>
        <taxon>Riboviria</taxon>
        <taxon>Orthornavirae</taxon>
        <taxon>Negarnaviricota</taxon>
        <taxon>Polyploviricotina</taxon>
        <taxon>Insthoviricetes</taxon>
        <taxon>Articulavirales</taxon>
        <taxon>Orthomyxoviridae</taxon>
        <taxon>Alphainfluenzavirus</taxon>
        <taxon>Alphainfluenzavirus influenzae</taxon>
        <taxon>Influenza A virus</taxon>
    </lineage>
</organism>
<evidence type="ECO:0000255" key="1">
    <source>
        <dbReference type="HAMAP-Rule" id="MF_04068"/>
    </source>
</evidence>
<dbReference type="EMBL" id="M63517">
    <property type="protein sequence ID" value="AAA43342.1"/>
    <property type="molecule type" value="Genomic_RNA"/>
</dbReference>
<dbReference type="SMR" id="Q76V10"/>
<dbReference type="GO" id="GO:0042025">
    <property type="term" value="C:host cell nucleus"/>
    <property type="evidence" value="ECO:0007669"/>
    <property type="project" value="UniProtKB-SubCell"/>
</dbReference>
<dbReference type="GO" id="GO:0016020">
    <property type="term" value="C:membrane"/>
    <property type="evidence" value="ECO:0007669"/>
    <property type="project" value="UniProtKB-KW"/>
</dbReference>
<dbReference type="GO" id="GO:0055036">
    <property type="term" value="C:virion membrane"/>
    <property type="evidence" value="ECO:0007669"/>
    <property type="project" value="UniProtKB-SubCell"/>
</dbReference>
<dbReference type="GO" id="GO:0003723">
    <property type="term" value="F:RNA binding"/>
    <property type="evidence" value="ECO:0007669"/>
    <property type="project" value="UniProtKB-UniRule"/>
</dbReference>
<dbReference type="GO" id="GO:0039660">
    <property type="term" value="F:structural constituent of virion"/>
    <property type="evidence" value="ECO:0007669"/>
    <property type="project" value="UniProtKB-UniRule"/>
</dbReference>
<dbReference type="GO" id="GO:0046761">
    <property type="term" value="P:viral budding from plasma membrane"/>
    <property type="evidence" value="ECO:0007669"/>
    <property type="project" value="UniProtKB-UniRule"/>
</dbReference>
<dbReference type="FunFam" id="1.10.10.180:FF:000001">
    <property type="entry name" value="Matrix protein 1"/>
    <property type="match status" value="1"/>
</dbReference>
<dbReference type="FunFam" id="1.20.91.10:FF:000001">
    <property type="entry name" value="Matrix protein 1"/>
    <property type="match status" value="1"/>
</dbReference>
<dbReference type="Gene3D" id="1.10.10.180">
    <property type="match status" value="1"/>
</dbReference>
<dbReference type="Gene3D" id="1.20.91.10">
    <property type="match status" value="1"/>
</dbReference>
<dbReference type="HAMAP" id="MF_04068">
    <property type="entry name" value="INFV_M1"/>
    <property type="match status" value="1"/>
</dbReference>
<dbReference type="InterPro" id="IPR036039">
    <property type="entry name" value="Flu_matrix_M1"/>
</dbReference>
<dbReference type="InterPro" id="IPR013188">
    <property type="entry name" value="Flu_matrix_M1_C"/>
</dbReference>
<dbReference type="InterPro" id="IPR001561">
    <property type="entry name" value="Flu_matrix_M1_N"/>
</dbReference>
<dbReference type="InterPro" id="IPR015423">
    <property type="entry name" value="Flu_matrix_M1_N_sub1"/>
</dbReference>
<dbReference type="InterPro" id="IPR015799">
    <property type="entry name" value="Flu_matrix_M1_N_sub2"/>
</dbReference>
<dbReference type="InterPro" id="IPR037533">
    <property type="entry name" value="INFV_M1"/>
</dbReference>
<dbReference type="Pfam" id="PF00598">
    <property type="entry name" value="Flu_M1"/>
    <property type="match status" value="1"/>
</dbReference>
<dbReference type="Pfam" id="PF08289">
    <property type="entry name" value="Flu_M1_C"/>
    <property type="match status" value="1"/>
</dbReference>
<dbReference type="SMART" id="SM00759">
    <property type="entry name" value="Flu_M1_C"/>
    <property type="match status" value="1"/>
</dbReference>
<dbReference type="SUPFAM" id="SSF48145">
    <property type="entry name" value="Influenza virus matrix protein M1"/>
    <property type="match status" value="1"/>
</dbReference>
<sequence>MSLLTEVETYVLSIVPSGPLKAEIAQRLEDVFAGKNTDLEALMEWLKTRPILSPLTKGILGFVFTLTVPSERGLQRRRFVQNALNGNGDPNNMDKAVKLYRKLKREITFHGAKEVALSYSAGALASCMGLIYNRMGTVTTEVAFGLVCATCEQIADSQHRSHRQMVTTTNPLIRHENRMVLASTTAKAMEQMAGSSEQAAEAMEVASQARQMVQAMRTIGTHPSSSAGLKDDLLENLQAYQKRMGVQMQRFK</sequence>
<protein>
    <recommendedName>
        <fullName evidence="1">Matrix protein 1</fullName>
        <shortName evidence="1">M1</shortName>
    </recommendedName>
</protein>
<organismHost>
    <name type="scientific">Aves</name>
    <dbReference type="NCBI Taxonomy" id="8782"/>
</organismHost>
<organismHost>
    <name type="scientific">Homo sapiens</name>
    <name type="common">Human</name>
    <dbReference type="NCBI Taxonomy" id="9606"/>
</organismHost>
<organismHost>
    <name type="scientific">Sus scrofa</name>
    <name type="common">Pig</name>
    <dbReference type="NCBI Taxonomy" id="9823"/>
</organismHost>
<comment type="function">
    <text evidence="1">Plays critical roles in virus replication, from virus entry and uncoating to assembly and budding of the virus particle. M1 binding to ribonucleocapsids (RNPs) in nucleus seems to inhibit viral transcription. Interaction of viral NEP with M1-RNP is thought to promote nuclear export of the complex, which is targeted to the virion assembly site at the apical plasma membrane in polarized epithelial cells. Interactions with NA and HA may bring M1, a non-raft-associated protein, into lipid rafts. Forms a continuous shell on the inner side of the lipid bilayer in virion, where it binds the RNP. During virus entry into cell, the M2 ion channel acidifies the internal virion core, inducing M1 dissociation from the RNP. M1-free RNPs are transported to the nucleus, where viral transcription and replication can take place.</text>
</comment>
<comment type="function">
    <text evidence="1">Determines the virion's shape: spherical or filamentous. Clinical isolates of influenza are characterized by the presence of significant proportion of filamentous virions, whereas after multiple passage on eggs or cell culture, virions have only spherical morphology. Filamentous virions are thought to be important to infect neighboring cells, and spherical virions more suited to spread through aerosol between hosts organisms.</text>
</comment>
<comment type="subunit">
    <text evidence="1">Homodimer and homomultimer. Interacts with NEP. Binds ribonucleocapsid by both interacting with genomic RNA and NP protein. May interact with HA and NA. Cannot bind NP without genomic RNA.</text>
</comment>
<comment type="subcellular location">
    <subcellularLocation>
        <location evidence="1">Virion membrane</location>
        <topology evidence="1">Peripheral membrane protein</topology>
        <orientation evidence="1">Cytoplasmic side</orientation>
    </subcellularLocation>
    <subcellularLocation>
        <location evidence="1">Host nucleus</location>
    </subcellularLocation>
</comment>
<comment type="alternative products">
    <event type="alternative splicing"/>
    <isoform>
        <id>Q76V10-1</id>
        <name>M1</name>
        <sequence type="displayed"/>
    </isoform>
    <isoform>
        <id>Q67206-1</id>
        <name>M2</name>
        <sequence type="external"/>
    </isoform>
    <text>Only the first 9 residues are shared by the 2 isoforms.</text>
</comment>
<comment type="miscellaneous">
    <text evidence="1">Most abundant protein in virion. When expressed alone can form virus-like particles in transfected cells.</text>
</comment>
<comment type="similarity">
    <text evidence="1">Belongs to the influenza viruses Matrix protein M1 family.</text>
</comment>
<accession>Q76V10</accession>
<reference key="1">
    <citation type="journal article" date="1991" name="J. Virol.">
        <title>Evolutionary analysis of the influenza A virus M gene with comparison of the M1 and M2 proteins.</title>
        <authorList>
            <person name="Ito T."/>
            <person name="Gorman O.T."/>
            <person name="Kawaoka Y."/>
            <person name="Bean W.J."/>
            <person name="Webster R.G."/>
        </authorList>
    </citation>
    <scope>NUCLEOTIDE SEQUENCE [GENOMIC RNA]</scope>
</reference>
<proteinExistence type="inferred from homology"/>